<proteinExistence type="evidence at protein level"/>
<organism>
    <name type="scientific">Geobacillus stearothermophilus</name>
    <name type="common">Bacillus stearothermophilus</name>
    <dbReference type="NCBI Taxonomy" id="1422"/>
    <lineage>
        <taxon>Bacteria</taxon>
        <taxon>Bacillati</taxon>
        <taxon>Bacillota</taxon>
        <taxon>Bacilli</taxon>
        <taxon>Bacillales</taxon>
        <taxon>Anoxybacillaceae</taxon>
        <taxon>Geobacillus</taxon>
    </lineage>
</organism>
<name>RL30_GEOSE</name>
<dbReference type="PIR" id="A02827">
    <property type="entry name" value="R5BS3F"/>
</dbReference>
<dbReference type="SMR" id="P02431"/>
<dbReference type="GO" id="GO:0022625">
    <property type="term" value="C:cytosolic large ribosomal subunit"/>
    <property type="evidence" value="ECO:0007669"/>
    <property type="project" value="TreeGrafter"/>
</dbReference>
<dbReference type="GO" id="GO:0003735">
    <property type="term" value="F:structural constituent of ribosome"/>
    <property type="evidence" value="ECO:0007669"/>
    <property type="project" value="InterPro"/>
</dbReference>
<dbReference type="GO" id="GO:0006412">
    <property type="term" value="P:translation"/>
    <property type="evidence" value="ECO:0007669"/>
    <property type="project" value="UniProtKB-UniRule"/>
</dbReference>
<dbReference type="CDD" id="cd01658">
    <property type="entry name" value="Ribosomal_L30"/>
    <property type="match status" value="1"/>
</dbReference>
<dbReference type="FunFam" id="3.30.1390.20:FF:000001">
    <property type="entry name" value="50S ribosomal protein L30"/>
    <property type="match status" value="1"/>
</dbReference>
<dbReference type="Gene3D" id="3.30.1390.20">
    <property type="entry name" value="Ribosomal protein L30, ferredoxin-like fold domain"/>
    <property type="match status" value="1"/>
</dbReference>
<dbReference type="HAMAP" id="MF_01371_B">
    <property type="entry name" value="Ribosomal_uL30_B"/>
    <property type="match status" value="1"/>
</dbReference>
<dbReference type="InterPro" id="IPR036919">
    <property type="entry name" value="Ribo_uL30_ferredoxin-like_sf"/>
</dbReference>
<dbReference type="InterPro" id="IPR005996">
    <property type="entry name" value="Ribosomal_uL30_bac-type"/>
</dbReference>
<dbReference type="InterPro" id="IPR018038">
    <property type="entry name" value="Ribosomal_uL30_CS"/>
</dbReference>
<dbReference type="InterPro" id="IPR016082">
    <property type="entry name" value="Ribosomal_uL30_ferredoxin-like"/>
</dbReference>
<dbReference type="NCBIfam" id="TIGR01308">
    <property type="entry name" value="rpmD_bact"/>
    <property type="match status" value="1"/>
</dbReference>
<dbReference type="PANTHER" id="PTHR15892:SF2">
    <property type="entry name" value="LARGE RIBOSOMAL SUBUNIT PROTEIN UL30M"/>
    <property type="match status" value="1"/>
</dbReference>
<dbReference type="PANTHER" id="PTHR15892">
    <property type="entry name" value="MITOCHONDRIAL RIBOSOMAL PROTEIN L30"/>
    <property type="match status" value="1"/>
</dbReference>
<dbReference type="Pfam" id="PF00327">
    <property type="entry name" value="Ribosomal_L30"/>
    <property type="match status" value="1"/>
</dbReference>
<dbReference type="PIRSF" id="PIRSF002211">
    <property type="entry name" value="Ribosomal_L30_bac-type"/>
    <property type="match status" value="1"/>
</dbReference>
<dbReference type="SUPFAM" id="SSF55129">
    <property type="entry name" value="Ribosomal protein L30p/L7e"/>
    <property type="match status" value="1"/>
</dbReference>
<dbReference type="PROSITE" id="PS00634">
    <property type="entry name" value="RIBOSOMAL_L30"/>
    <property type="match status" value="1"/>
</dbReference>
<protein>
    <recommendedName>
        <fullName evidence="1">Large ribosomal subunit protein uL30</fullName>
    </recommendedName>
    <alternativeName>
        <fullName evidence="3">50S ribosomal protein L30</fullName>
    </alternativeName>
</protein>
<feature type="initiator methionine" description="Removed" evidence="2">
    <location>
        <position position="1"/>
    </location>
</feature>
<feature type="chain" id="PRO_0000104582" description="Large ribosomal subunit protein uL30">
    <location>
        <begin position="2"/>
        <end position="63"/>
    </location>
</feature>
<reference key="1">
    <citation type="journal article" date="1984" name="J. Biol. Chem.">
        <title>Proteins of the Bacillus stearothermophilus ribosome. The amino acid sequences of proteins S5 and L30.</title>
        <authorList>
            <person name="Kimura M."/>
        </authorList>
    </citation>
    <scope>PROTEIN SEQUENCE OF 2-63</scope>
    <source>
        <strain>ATCC 29609 / DSM 2027 / NCA 1503 / NCIMB 8924</strain>
    </source>
</reference>
<reference key="2">
    <citation type="journal article" date="1986" name="Proc. Natl. Acad. Sci. U.S.A.">
        <title>Crystal structure of a prokaryotic ribosomal protein.</title>
        <authorList>
            <person name="Wilson K.S."/>
            <person name="Appelt K."/>
            <person name="Badger J."/>
            <person name="Tanaka I."/>
            <person name="White S.W."/>
        </authorList>
    </citation>
    <scope>X-RAY CRYSTALLOGRAPHY (2.5 ANGSTROMS)</scope>
</reference>
<keyword id="KW-0903">Direct protein sequencing</keyword>
<keyword id="KW-0687">Ribonucleoprotein</keyword>
<keyword id="KW-0689">Ribosomal protein</keyword>
<evidence type="ECO:0000255" key="1">
    <source>
        <dbReference type="HAMAP-Rule" id="MF_01371"/>
    </source>
</evidence>
<evidence type="ECO:0000269" key="2">
    <source>
    </source>
</evidence>
<evidence type="ECO:0000305" key="3"/>
<gene>
    <name evidence="1" type="primary">rpmD</name>
</gene>
<accession>P02431</accession>
<comment type="subunit">
    <text>Part of the 50S ribosomal subunit.</text>
</comment>
<comment type="similarity">
    <text evidence="1">Belongs to the universal ribosomal protein uL30 family.</text>
</comment>
<sequence length="63" mass="7185">MAKKLAITLTRSVIGRPEDQRITVRTLGLRKMHQTVVHNDNPAIRGMINKVAHLVKVKEIEEE</sequence>